<gene>
    <name evidence="12 13" type="primary">nanos</name>
    <name evidence="12" type="synonym">nos</name>
    <name evidence="13" type="ORF">CG5637</name>
</gene>
<comment type="function">
    <text>Maternal RNA-binding protein that is required for germ cells proliferation and self-renewal. Acts by forming a complex with pum and brat that regulates translation and mRNA stability. The complex binds to the Nanos Response Element (NRE), a 16 bp sequence in the hb mRNA 3'-UTR and prevents its translation. Controls posterior development. Rescuing factor for the abdominal defect of posterior group mutants. The other posterior group genes are not required for nanos function but rather play a role in localization or distribution of nanos protein.</text>
</comment>
<comment type="subunit">
    <text evidence="3 5 6 9 10">Interacts with pum and brat (PubMed:10541556, PubMed:11274060). Interacts with cup (PubMed:11060247). Interacts with mei-P26; possibly involved in regulation of brat levels (PubMed:22438571). Interacts with wh; may be involved in mei-P26-dependent derepression of the BMP signaling pathway (PubMed:31941704). Acts via the formation of a quaternary complex composed of pum, nanos, brat and the 3'-UTR mRNA of hb. Binds RNA with no specificity.</text>
</comment>
<comment type="subcellular location">
    <subcellularLocation>
        <location evidence="7">Cytoplasm</location>
        <location evidence="7">Cytoplasmic ribonucleoprotein granule</location>
    </subcellularLocation>
</comment>
<comment type="tissue specificity">
    <text evidence="8">Posterior part of the embryo. While the transcript is present throughout the embryo, nanos translation is controlled by smg, and the protein is found in pole plasm and pole cells. In the female ovary expressed in germline stem cells, precystoblasts and in maturing cystoblasts; in early cystoblasts expression is post-transcriptionally repressed by bam in a 3'UTR-dependent manner (PubMed:19470484).</text>
</comment>
<comment type="developmental stage">
    <text>Expressed maternally. Present during oogenesis and early stages of embryogenesis.</text>
</comment>
<comment type="domain">
    <text>The Nanos-type zinc finger is composed of two C2HC motifs, each motif binding one molecule of zinc. The presence of the zinc molecules is essential for the translation repression activity of the protein.</text>
</comment>
<comment type="similarity">
    <text evidence="1">Belongs to the nanos family.</text>
</comment>
<evidence type="ECO:0000255" key="1">
    <source>
        <dbReference type="PROSITE-ProRule" id="PRU00855"/>
    </source>
</evidence>
<evidence type="ECO:0000256" key="2">
    <source>
        <dbReference type="SAM" id="MobiDB-lite"/>
    </source>
</evidence>
<evidence type="ECO:0000269" key="3">
    <source>
    </source>
</evidence>
<evidence type="ECO:0000269" key="4">
    <source>
    </source>
</evidence>
<evidence type="ECO:0000269" key="5">
    <source>
    </source>
</evidence>
<evidence type="ECO:0000269" key="6">
    <source>
    </source>
</evidence>
<evidence type="ECO:0000269" key="7">
    <source>
    </source>
</evidence>
<evidence type="ECO:0000269" key="8">
    <source>
    </source>
</evidence>
<evidence type="ECO:0000269" key="9">
    <source>
    </source>
</evidence>
<evidence type="ECO:0000269" key="10">
    <source>
    </source>
</evidence>
<evidence type="ECO:0000269" key="11">
    <source>
    </source>
</evidence>
<evidence type="ECO:0000303" key="12">
    <source>
    </source>
</evidence>
<evidence type="ECO:0000312" key="13">
    <source>
        <dbReference type="FlyBase" id="FBgn0002962"/>
    </source>
</evidence>
<evidence type="ECO:0000312" key="14">
    <source>
        <dbReference type="Proteomes" id="UP000000803"/>
    </source>
</evidence>
<sequence length="401" mass="43428">MFRSNLEGSGAAAVGVANPPSLAQSGKIFQLQDNFSAFHARGGLNILGLQDMYLDTSGANSSATLSPPITPVTPDPSTSAQSTHFPFLADSAATANSLLMQRQYHYHLLLQQQQQLAMAQHQLALAASAAAASASHQQTDEIARSLKIFAQVTTGAAENAAGSMQDVMQEFATNGYASDDLGRMSYGSAPPQVQMPPQQQHQQQQGLHLPLGRNPAQLQTNGGNLMPIPLATHWLNNYREHLNNVWRNMSYIPAAPNTMGLQAQTAATVSTNLGVGMGLGLPVQGEQLRGASNSSNNNNNNNKVYKRYNSKAKEISRHCVFCENNNEPEAVINSHSVRDNFNRVLCPKLRTYVCPICGASGDSAHTIKYCPKKPIITMEDAIKAESFRLAKSSYYKQQMKV</sequence>
<organism evidence="14">
    <name type="scientific">Drosophila melanogaster</name>
    <name type="common">Fruit fly</name>
    <dbReference type="NCBI Taxonomy" id="7227"/>
    <lineage>
        <taxon>Eukaryota</taxon>
        <taxon>Metazoa</taxon>
        <taxon>Ecdysozoa</taxon>
        <taxon>Arthropoda</taxon>
        <taxon>Hexapoda</taxon>
        <taxon>Insecta</taxon>
        <taxon>Pterygota</taxon>
        <taxon>Neoptera</taxon>
        <taxon>Endopterygota</taxon>
        <taxon>Diptera</taxon>
        <taxon>Brachycera</taxon>
        <taxon>Muscomorpha</taxon>
        <taxon>Ephydroidea</taxon>
        <taxon>Drosophilidae</taxon>
        <taxon>Drosophila</taxon>
        <taxon>Sophophora</taxon>
    </lineage>
</organism>
<reference key="1">
    <citation type="journal article" date="1991" name="Cell">
        <title>Nanos is the localized posterior determinant in Drosophila.</title>
        <authorList>
            <person name="Wang C.I."/>
            <person name="Lehmann R."/>
        </authorList>
    </citation>
    <scope>NUCLEOTIDE SEQUENCE [GENOMIC DNA]</scope>
</reference>
<reference key="2">
    <citation type="journal article" date="2000" name="Science">
        <title>The genome sequence of Drosophila melanogaster.</title>
        <authorList>
            <person name="Adams M.D."/>
            <person name="Celniker S.E."/>
            <person name="Holt R.A."/>
            <person name="Evans C.A."/>
            <person name="Gocayne J.D."/>
            <person name="Amanatides P.G."/>
            <person name="Scherer S.E."/>
            <person name="Li P.W."/>
            <person name="Hoskins R.A."/>
            <person name="Galle R.F."/>
            <person name="George R.A."/>
            <person name="Lewis S.E."/>
            <person name="Richards S."/>
            <person name="Ashburner M."/>
            <person name="Henderson S.N."/>
            <person name="Sutton G.G."/>
            <person name="Wortman J.R."/>
            <person name="Yandell M.D."/>
            <person name="Zhang Q."/>
            <person name="Chen L.X."/>
            <person name="Brandon R.C."/>
            <person name="Rogers Y.-H.C."/>
            <person name="Blazej R.G."/>
            <person name="Champe M."/>
            <person name="Pfeiffer B.D."/>
            <person name="Wan K.H."/>
            <person name="Doyle C."/>
            <person name="Baxter E.G."/>
            <person name="Helt G."/>
            <person name="Nelson C.R."/>
            <person name="Miklos G.L.G."/>
            <person name="Abril J.F."/>
            <person name="Agbayani A."/>
            <person name="An H.-J."/>
            <person name="Andrews-Pfannkoch C."/>
            <person name="Baldwin D."/>
            <person name="Ballew R.M."/>
            <person name="Basu A."/>
            <person name="Baxendale J."/>
            <person name="Bayraktaroglu L."/>
            <person name="Beasley E.M."/>
            <person name="Beeson K.Y."/>
            <person name="Benos P.V."/>
            <person name="Berman B.P."/>
            <person name="Bhandari D."/>
            <person name="Bolshakov S."/>
            <person name="Borkova D."/>
            <person name="Botchan M.R."/>
            <person name="Bouck J."/>
            <person name="Brokstein P."/>
            <person name="Brottier P."/>
            <person name="Burtis K.C."/>
            <person name="Busam D.A."/>
            <person name="Butler H."/>
            <person name="Cadieu E."/>
            <person name="Center A."/>
            <person name="Chandra I."/>
            <person name="Cherry J.M."/>
            <person name="Cawley S."/>
            <person name="Dahlke C."/>
            <person name="Davenport L.B."/>
            <person name="Davies P."/>
            <person name="de Pablos B."/>
            <person name="Delcher A."/>
            <person name="Deng Z."/>
            <person name="Mays A.D."/>
            <person name="Dew I."/>
            <person name="Dietz S.M."/>
            <person name="Dodson K."/>
            <person name="Doup L.E."/>
            <person name="Downes M."/>
            <person name="Dugan-Rocha S."/>
            <person name="Dunkov B.C."/>
            <person name="Dunn P."/>
            <person name="Durbin K.J."/>
            <person name="Evangelista C.C."/>
            <person name="Ferraz C."/>
            <person name="Ferriera S."/>
            <person name="Fleischmann W."/>
            <person name="Fosler C."/>
            <person name="Gabrielian A.E."/>
            <person name="Garg N.S."/>
            <person name="Gelbart W.M."/>
            <person name="Glasser K."/>
            <person name="Glodek A."/>
            <person name="Gong F."/>
            <person name="Gorrell J.H."/>
            <person name="Gu Z."/>
            <person name="Guan P."/>
            <person name="Harris M."/>
            <person name="Harris N.L."/>
            <person name="Harvey D.A."/>
            <person name="Heiman T.J."/>
            <person name="Hernandez J.R."/>
            <person name="Houck J."/>
            <person name="Hostin D."/>
            <person name="Houston K.A."/>
            <person name="Howland T.J."/>
            <person name="Wei M.-H."/>
            <person name="Ibegwam C."/>
            <person name="Jalali M."/>
            <person name="Kalush F."/>
            <person name="Karpen G.H."/>
            <person name="Ke Z."/>
            <person name="Kennison J.A."/>
            <person name="Ketchum K.A."/>
            <person name="Kimmel B.E."/>
            <person name="Kodira C.D."/>
            <person name="Kraft C.L."/>
            <person name="Kravitz S."/>
            <person name="Kulp D."/>
            <person name="Lai Z."/>
            <person name="Lasko P."/>
            <person name="Lei Y."/>
            <person name="Levitsky A.A."/>
            <person name="Li J.H."/>
            <person name="Li Z."/>
            <person name="Liang Y."/>
            <person name="Lin X."/>
            <person name="Liu X."/>
            <person name="Mattei B."/>
            <person name="McIntosh T.C."/>
            <person name="McLeod M.P."/>
            <person name="McPherson D."/>
            <person name="Merkulov G."/>
            <person name="Milshina N.V."/>
            <person name="Mobarry C."/>
            <person name="Morris J."/>
            <person name="Moshrefi A."/>
            <person name="Mount S.M."/>
            <person name="Moy M."/>
            <person name="Murphy B."/>
            <person name="Murphy L."/>
            <person name="Muzny D.M."/>
            <person name="Nelson D.L."/>
            <person name="Nelson D.R."/>
            <person name="Nelson K.A."/>
            <person name="Nixon K."/>
            <person name="Nusskern D.R."/>
            <person name="Pacleb J.M."/>
            <person name="Palazzolo M."/>
            <person name="Pittman G.S."/>
            <person name="Pan S."/>
            <person name="Pollard J."/>
            <person name="Puri V."/>
            <person name="Reese M.G."/>
            <person name="Reinert K."/>
            <person name="Remington K."/>
            <person name="Saunders R.D.C."/>
            <person name="Scheeler F."/>
            <person name="Shen H."/>
            <person name="Shue B.C."/>
            <person name="Siden-Kiamos I."/>
            <person name="Simpson M."/>
            <person name="Skupski M.P."/>
            <person name="Smith T.J."/>
            <person name="Spier E."/>
            <person name="Spradling A.C."/>
            <person name="Stapleton M."/>
            <person name="Strong R."/>
            <person name="Sun E."/>
            <person name="Svirskas R."/>
            <person name="Tector C."/>
            <person name="Turner R."/>
            <person name="Venter E."/>
            <person name="Wang A.H."/>
            <person name="Wang X."/>
            <person name="Wang Z.-Y."/>
            <person name="Wassarman D.A."/>
            <person name="Weinstock G.M."/>
            <person name="Weissenbach J."/>
            <person name="Williams S.M."/>
            <person name="Woodage T."/>
            <person name="Worley K.C."/>
            <person name="Wu D."/>
            <person name="Yang S."/>
            <person name="Yao Q.A."/>
            <person name="Ye J."/>
            <person name="Yeh R.-F."/>
            <person name="Zaveri J.S."/>
            <person name="Zhan M."/>
            <person name="Zhang G."/>
            <person name="Zhao Q."/>
            <person name="Zheng L."/>
            <person name="Zheng X.H."/>
            <person name="Zhong F.N."/>
            <person name="Zhong W."/>
            <person name="Zhou X."/>
            <person name="Zhu S.C."/>
            <person name="Zhu X."/>
            <person name="Smith H.O."/>
            <person name="Gibbs R.A."/>
            <person name="Myers E.W."/>
            <person name="Rubin G.M."/>
            <person name="Venter J.C."/>
        </authorList>
    </citation>
    <scope>NUCLEOTIDE SEQUENCE [LARGE SCALE GENOMIC DNA]</scope>
    <source>
        <strain>Berkeley</strain>
    </source>
</reference>
<reference key="3">
    <citation type="journal article" date="2002" name="Genome Biol.">
        <title>Annotation of the Drosophila melanogaster euchromatic genome: a systematic review.</title>
        <authorList>
            <person name="Misra S."/>
            <person name="Crosby M.A."/>
            <person name="Mungall C.J."/>
            <person name="Matthews B.B."/>
            <person name="Campbell K.S."/>
            <person name="Hradecky P."/>
            <person name="Huang Y."/>
            <person name="Kaminker J.S."/>
            <person name="Millburn G.H."/>
            <person name="Prochnik S.E."/>
            <person name="Smith C.D."/>
            <person name="Tupy J.L."/>
            <person name="Whitfield E.J."/>
            <person name="Bayraktaroglu L."/>
            <person name="Berman B.P."/>
            <person name="Bettencourt B.R."/>
            <person name="Celniker S.E."/>
            <person name="de Grey A.D.N.J."/>
            <person name="Drysdale R.A."/>
            <person name="Harris N.L."/>
            <person name="Richter J."/>
            <person name="Russo S."/>
            <person name="Schroeder A.J."/>
            <person name="Shu S.Q."/>
            <person name="Stapleton M."/>
            <person name="Yamada C."/>
            <person name="Ashburner M."/>
            <person name="Gelbart W.M."/>
            <person name="Rubin G.M."/>
            <person name="Lewis S.E."/>
        </authorList>
    </citation>
    <scope>GENOME REANNOTATION</scope>
    <source>
        <strain>Berkeley</strain>
    </source>
</reference>
<reference key="4">
    <citation type="journal article" date="1999" name="Genetics">
        <title>A selective screen reveals discrete functional domains in Drosophila Nanos.</title>
        <authorList>
            <person name="Arrizabalaga G."/>
            <person name="Lehmann R."/>
        </authorList>
    </citation>
    <scope>MUTAGENESIS OF CYS-319; CYS-322; HIS-335; SER-336; VAL-337; ARG-338; PRO-347; LEU-349; ARG-350; VAL-353; CYS-357; GLY-361; ALA-364; HIS-365; THR-377 AND MET-378</scope>
</reference>
<reference key="5">
    <citation type="journal article" date="1999" name="Genes Dev.">
        <title>Recruitment of Nanos to hunchback mRNA by Pumilio.</title>
        <authorList>
            <person name="Sonoda J."/>
            <person name="Wharton R.P."/>
        </authorList>
    </citation>
    <scope>INTERACTION WITH PUM</scope>
</reference>
<reference key="6">
    <citation type="journal article" date="2000" name="Development">
        <title>Nanos interacts with cup in the female germline of Drosophila.</title>
        <authorList>
            <person name="Verrotti A.C."/>
            <person name="Wharton R.P."/>
        </authorList>
    </citation>
    <scope>INTERACTION WITH CUP</scope>
</reference>
<reference key="7">
    <citation type="journal article" date="2001" name="Genes Dev.">
        <title>Drosophila Brain tumor is a translational repressor.</title>
        <authorList>
            <person name="Sonoda J."/>
            <person name="Wharton R.P."/>
        </authorList>
    </citation>
    <scope>INTERACTION WITH BRAT AND PUM</scope>
</reference>
<reference key="8">
    <citation type="journal article" date="2001" name="Annu. Rev. Genet.">
        <title>Translational regulation and RNA localization in Drosophila oocytes and embryos.</title>
        <authorList>
            <person name="Johnstone O."/>
            <person name="Lasko P."/>
        </authorList>
    </citation>
    <scope>REVIEW</scope>
</reference>
<reference key="9">
    <citation type="journal article" date="2006" name="Neuron">
        <title>Staufen- and FMRP-containing neuronal RNPs are structurally and functionally related to somatic P bodies.</title>
        <authorList>
            <person name="Barbee S.A."/>
            <person name="Estes P.S."/>
            <person name="Cziko A.M."/>
            <person name="Hillebrand J."/>
            <person name="Luedeman R.A."/>
            <person name="Coller J.M."/>
            <person name="Johnson N."/>
            <person name="Howlett I.C."/>
            <person name="Geng C."/>
            <person name="Ueda R."/>
            <person name="Brand A.H."/>
            <person name="Newbury S.F."/>
            <person name="Wilhelm J.E."/>
            <person name="Levine R.B."/>
            <person name="Nakamura A."/>
            <person name="Parker R."/>
            <person name="Ramaswami M."/>
        </authorList>
    </citation>
    <scope>SUBCELLULAR LOCATION</scope>
</reference>
<reference key="10">
    <citation type="journal article" date="2009" name="Proc. Natl. Acad. Sci. U.S.A.">
        <title>Bam and Bgcn antagonize Nanos-dependent germ-line stem cell maintenance.</title>
        <authorList>
            <person name="Li Y."/>
            <person name="Minor N.T."/>
            <person name="Park J.K."/>
            <person name="McKearin D.M."/>
            <person name="Maines J.Z."/>
        </authorList>
    </citation>
    <scope>TISSUE SPECIFICITY</scope>
</reference>
<reference key="11">
    <citation type="journal article" date="2012" name="Development">
        <title>Mei-P26 regulates the maintenance of ovarian germline stem cells by promoting BMP signaling.</title>
        <authorList>
            <person name="Li Y."/>
            <person name="Maines J.Z."/>
            <person name="Tastan O.Y."/>
            <person name="McKearin D.M."/>
            <person name="Buszczak M."/>
        </authorList>
    </citation>
    <scope>INTERACTION WITH MEI-P26</scope>
</reference>
<reference key="12">
    <citation type="journal article" date="2020" name="Development">
        <title>WD40 protein Wuho controls germline homeostasis via TRIM-NHL tumor suppressor Mei-p26 in Drosophila.</title>
        <authorList>
            <person name="Rastegari E."/>
            <person name="Kajal K."/>
            <person name="Tan B.S."/>
            <person name="Huang F."/>
            <person name="Chen R.H."/>
            <person name="Hsieh T.S."/>
            <person name="Hsu H.J."/>
        </authorList>
    </citation>
    <scope>INTERACTION WITH WH</scope>
</reference>
<reference key="13">
    <citation type="journal article" date="1997" name="EMBO J.">
        <title>A CCHC metal-binding domain in Nanos is essential for translational regulation.</title>
        <authorList>
            <person name="Curtis D."/>
            <person name="Treiber D.K."/>
            <person name="Tao F."/>
            <person name="Zamore P.D."/>
            <person name="Williamson J.R."/>
            <person name="Lehmann R."/>
        </authorList>
    </citation>
    <scope>STRUCTURE BY NMR OF THE NANOS-ZINC-FINGER</scope>
    <scope>MUTAGENESIS OF CYS-319 AND CYS-354</scope>
</reference>
<feature type="chain" id="PRO_0000207684" description="Protein nanos">
    <location>
        <begin position="1"/>
        <end position="401"/>
    </location>
</feature>
<feature type="zinc finger region" description="Nanos-type" evidence="1">
    <location>
        <begin position="318"/>
        <end position="372"/>
    </location>
</feature>
<feature type="region of interest" description="Disordered" evidence="2">
    <location>
        <begin position="181"/>
        <end position="207"/>
    </location>
</feature>
<feature type="short sequence motif" description="C2HC 1" evidence="1">
    <location>
        <begin position="319"/>
        <end position="346"/>
    </location>
</feature>
<feature type="short sequence motif" description="C2HC 2" evidence="1">
    <location>
        <begin position="354"/>
        <end position="370"/>
    </location>
</feature>
<feature type="compositionally biased region" description="Low complexity" evidence="2">
    <location>
        <begin position="190"/>
        <end position="205"/>
    </location>
</feature>
<feature type="binding site" evidence="1">
    <location>
        <position position="319"/>
    </location>
    <ligand>
        <name>Zn(2+)</name>
        <dbReference type="ChEBI" id="CHEBI:29105"/>
        <label>1</label>
    </ligand>
</feature>
<feature type="binding site" evidence="1">
    <location>
        <position position="322"/>
    </location>
    <ligand>
        <name>Zn(2+)</name>
        <dbReference type="ChEBI" id="CHEBI:29105"/>
        <label>1</label>
    </ligand>
</feature>
<feature type="binding site" evidence="1">
    <location>
        <position position="335"/>
    </location>
    <ligand>
        <name>Zn(2+)</name>
        <dbReference type="ChEBI" id="CHEBI:29105"/>
        <label>1</label>
    </ligand>
</feature>
<feature type="binding site" evidence="1">
    <location>
        <position position="346"/>
    </location>
    <ligand>
        <name>Zn(2+)</name>
        <dbReference type="ChEBI" id="CHEBI:29105"/>
        <label>1</label>
    </ligand>
</feature>
<feature type="binding site" evidence="1">
    <location>
        <position position="354"/>
    </location>
    <ligand>
        <name>Zn(2+)</name>
        <dbReference type="ChEBI" id="CHEBI:29105"/>
        <label>2</label>
    </ligand>
</feature>
<feature type="binding site" evidence="1">
    <location>
        <position position="357"/>
    </location>
    <ligand>
        <name>Zn(2+)</name>
        <dbReference type="ChEBI" id="CHEBI:29105"/>
        <label>2</label>
    </ligand>
</feature>
<feature type="binding site" evidence="1">
    <location>
        <position position="365"/>
    </location>
    <ligand>
        <name>Zn(2+)</name>
        <dbReference type="ChEBI" id="CHEBI:29105"/>
        <label>2</label>
    </ligand>
</feature>
<feature type="binding site" evidence="1">
    <location>
        <position position="370"/>
    </location>
    <ligand>
        <name>Zn(2+)</name>
        <dbReference type="ChEBI" id="CHEBI:29105"/>
        <label>2</label>
    </ligand>
</feature>
<feature type="mutagenesis site" description="Strong defects in abdomen and oogenesis. Reduces binding of zinc. Complete loss of zinc-binding and loss of function; when associated with Y-354." evidence="4 11">
    <original>C</original>
    <variation>Y</variation>
    <location>
        <position position="319"/>
    </location>
</feature>
<feature type="mutagenesis site" description="Strong defects in abdomen and oogenesis." evidence="4">
    <original>C</original>
    <variation>S</variation>
    <location>
        <position position="322"/>
    </location>
</feature>
<feature type="mutagenesis site" description="Strong defects in abdomen and oogenesis." evidence="4">
    <original>H</original>
    <variation>Y</variation>
    <location>
        <position position="335"/>
    </location>
</feature>
<feature type="mutagenesis site" description="Strong defects in abdomen and oogenesis." evidence="4">
    <original>S</original>
    <variation>L</variation>
    <location>
        <position position="336"/>
    </location>
</feature>
<feature type="mutagenesis site" description="Strong defects in abdomen and oogenesis." evidence="4">
    <original>V</original>
    <variation>E</variation>
    <location>
        <position position="337"/>
    </location>
</feature>
<feature type="mutagenesis site" description="Strong defects in abdomen and oogenesis." evidence="4">
    <original>R</original>
    <variation>Q</variation>
    <location>
        <position position="338"/>
    </location>
</feature>
<feature type="mutagenesis site" description="Strong defects in abdomen and oogenesis." evidence="4">
    <original>P</original>
    <variation>S</variation>
    <location>
        <position position="347"/>
    </location>
</feature>
<feature type="mutagenesis site" description="Strong defects in abdomen and oogenesis." evidence="4">
    <original>L</original>
    <variation>R</variation>
    <location>
        <position position="349"/>
    </location>
</feature>
<feature type="mutagenesis site" description="Strong defects in abdomen and oogenesis." evidence="4">
    <original>R</original>
    <variation>Q</variation>
    <location>
        <position position="350"/>
    </location>
</feature>
<feature type="mutagenesis site" description="Strong defects in abdomen and oogenesis." evidence="4">
    <original>V</original>
    <variation>M</variation>
    <location>
        <position position="353"/>
    </location>
</feature>
<feature type="mutagenesis site" description="Strong defects in abdomen and oogenesis. Reduces binding of zinc. Complete loss of zinc-binding and loss of function; when associated with Y-319." evidence="11">
    <original>C</original>
    <variation>Y</variation>
    <location>
        <position position="354"/>
    </location>
</feature>
<feature type="mutagenesis site" description="Strong defects in abdomen and oogenesis." evidence="4">
    <original>C</original>
    <variation>Y</variation>
    <location>
        <position position="357"/>
    </location>
</feature>
<feature type="mutagenesis site" description="Strong defects in abdomen and oogenesis." evidence="4">
    <original>G</original>
    <variation>E</variation>
    <location>
        <position position="361"/>
    </location>
</feature>
<feature type="mutagenesis site" description="Strong defects in abdomen and oogenesis." evidence="4">
    <original>A</original>
    <variation>T</variation>
    <location>
        <position position="364"/>
    </location>
</feature>
<feature type="mutagenesis site" description="Strong defects in abdomen and oogenesis." evidence="4">
    <original>H</original>
    <variation>Y</variation>
    <location>
        <position position="365"/>
    </location>
</feature>
<feature type="mutagenesis site" description="Strong defects in oogenesis. Weak defects in abdomen." evidence="4">
    <original>T</original>
    <variation>I</variation>
    <location>
        <position position="377"/>
    </location>
</feature>
<feature type="mutagenesis site" description="Strong defects in abdomen." evidence="4">
    <original>M</original>
    <variation>K</variation>
    <location>
        <position position="378"/>
    </location>
</feature>
<protein>
    <recommendedName>
        <fullName evidence="12 13">Protein nanos</fullName>
    </recommendedName>
</protein>
<name>NANOS_DROME</name>
<dbReference type="EMBL" id="M72421">
    <property type="protein sequence ID" value="AAA28715.1"/>
    <property type="molecule type" value="Genomic_DNA"/>
</dbReference>
<dbReference type="EMBL" id="AE014297">
    <property type="protein sequence ID" value="AAF55641.1"/>
    <property type="molecule type" value="Genomic_DNA"/>
</dbReference>
<dbReference type="PIR" id="A40042">
    <property type="entry name" value="A40042"/>
</dbReference>
<dbReference type="RefSeq" id="NP_476658.1">
    <property type="nucleotide sequence ID" value="NM_057310.4"/>
</dbReference>
<dbReference type="PDB" id="5KL1">
    <property type="method" value="X-ray"/>
    <property type="resolution" value="3.70 A"/>
    <property type="chains" value="B=289-401"/>
</dbReference>
<dbReference type="PDB" id="5KL8">
    <property type="method" value="X-ray"/>
    <property type="resolution" value="4.00 A"/>
    <property type="chains" value="B=289-401"/>
</dbReference>
<dbReference type="PDBsum" id="5KL1"/>
<dbReference type="PDBsum" id="5KL8"/>
<dbReference type="SASBDB" id="P25724"/>
<dbReference type="SMR" id="P25724"/>
<dbReference type="BioGRID" id="67295">
    <property type="interactions" value="69"/>
</dbReference>
<dbReference type="DIP" id="DIP-23696N"/>
<dbReference type="FunCoup" id="P25724">
    <property type="interactions" value="6"/>
</dbReference>
<dbReference type="IntAct" id="P25724">
    <property type="interactions" value="2"/>
</dbReference>
<dbReference type="STRING" id="7227.FBpp0083146"/>
<dbReference type="PaxDb" id="7227-FBpp0083146"/>
<dbReference type="ABCD" id="P25724">
    <property type="antibodies" value="4 sequenced antibodies"/>
</dbReference>
<dbReference type="DNASU" id="42297"/>
<dbReference type="EnsemblMetazoa" id="FBtr0083732">
    <property type="protein sequence ID" value="FBpp0083146"/>
    <property type="gene ID" value="FBgn0002962"/>
</dbReference>
<dbReference type="GeneID" id="42297"/>
<dbReference type="KEGG" id="dme:Dmel_CG5637"/>
<dbReference type="UCSC" id="CG5637-RA">
    <property type="organism name" value="d. melanogaster"/>
</dbReference>
<dbReference type="AGR" id="FB:FBgn0002962"/>
<dbReference type="CTD" id="42297"/>
<dbReference type="FlyBase" id="FBgn0002962">
    <property type="gene designation" value="nanos"/>
</dbReference>
<dbReference type="VEuPathDB" id="VectorBase:FBgn0002962"/>
<dbReference type="eggNOG" id="KOG4602">
    <property type="taxonomic scope" value="Eukaryota"/>
</dbReference>
<dbReference type="InParanoid" id="P25724"/>
<dbReference type="OMA" id="ANHQQKD"/>
<dbReference type="OrthoDB" id="10010129at2759"/>
<dbReference type="PhylomeDB" id="P25724"/>
<dbReference type="SignaLink" id="P25724"/>
<dbReference type="BioGRID-ORCS" id="42297">
    <property type="hits" value="0 hits in 3 CRISPR screens"/>
</dbReference>
<dbReference type="GenomeRNAi" id="42297"/>
<dbReference type="PRO" id="PR:P25724"/>
<dbReference type="Proteomes" id="UP000000803">
    <property type="component" value="Chromosome 3R"/>
</dbReference>
<dbReference type="Bgee" id="FBgn0002962">
    <property type="expression patterns" value="Expressed in cleaving embryo and 36 other cell types or tissues"/>
</dbReference>
<dbReference type="ExpressionAtlas" id="P25724">
    <property type="expression patterns" value="baseline and differential"/>
</dbReference>
<dbReference type="GO" id="GO:0031594">
    <property type="term" value="C:neuromuscular junction"/>
    <property type="evidence" value="ECO:0000314"/>
    <property type="project" value="FlyBase"/>
</dbReference>
<dbReference type="GO" id="GO:0071598">
    <property type="term" value="C:neuronal ribonucleoprotein granule"/>
    <property type="evidence" value="ECO:0000314"/>
    <property type="project" value="UniProtKB"/>
</dbReference>
<dbReference type="GO" id="GO:0048471">
    <property type="term" value="C:perinuclear region of cytoplasm"/>
    <property type="evidence" value="ECO:0000318"/>
    <property type="project" value="GO_Central"/>
</dbReference>
<dbReference type="GO" id="GO:0045495">
    <property type="term" value="C:pole plasm"/>
    <property type="evidence" value="ECO:0000304"/>
    <property type="project" value="FlyBase"/>
</dbReference>
<dbReference type="GO" id="GO:0098975">
    <property type="term" value="C:postsynapse of neuromuscular junction"/>
    <property type="evidence" value="ECO:0000315"/>
    <property type="project" value="FlyBase"/>
</dbReference>
<dbReference type="GO" id="GO:0003729">
    <property type="term" value="F:mRNA binding"/>
    <property type="evidence" value="ECO:0000318"/>
    <property type="project" value="GO_Central"/>
</dbReference>
<dbReference type="GO" id="GO:0008270">
    <property type="term" value="F:zinc ion binding"/>
    <property type="evidence" value="ECO:0007669"/>
    <property type="project" value="UniProtKB-KW"/>
</dbReference>
<dbReference type="GO" id="GO:0008595">
    <property type="term" value="P:anterior/posterior axis specification, embryo"/>
    <property type="evidence" value="ECO:0000304"/>
    <property type="project" value="FlyBase"/>
</dbReference>
<dbReference type="GO" id="GO:0048813">
    <property type="term" value="P:dendrite morphogenesis"/>
    <property type="evidence" value="ECO:0000315"/>
    <property type="project" value="FlyBase"/>
</dbReference>
<dbReference type="GO" id="GO:0007281">
    <property type="term" value="P:germ cell development"/>
    <property type="evidence" value="ECO:0000315"/>
    <property type="project" value="FlyBase"/>
</dbReference>
<dbReference type="GO" id="GO:0008354">
    <property type="term" value="P:germ cell migration"/>
    <property type="evidence" value="ECO:0000304"/>
    <property type="project" value="FlyBase"/>
</dbReference>
<dbReference type="GO" id="GO:0030718">
    <property type="term" value="P:germ-line stem cell population maintenance"/>
    <property type="evidence" value="ECO:0000314"/>
    <property type="project" value="FlyBase"/>
</dbReference>
<dbReference type="GO" id="GO:0043066">
    <property type="term" value="P:negative regulation of apoptotic process"/>
    <property type="evidence" value="ECO:0000316"/>
    <property type="project" value="FlyBase"/>
</dbReference>
<dbReference type="GO" id="GO:0045886">
    <property type="term" value="P:negative regulation of synaptic assembly at neuromuscular junction"/>
    <property type="evidence" value="ECO:0000315"/>
    <property type="project" value="FlyBase"/>
</dbReference>
<dbReference type="GO" id="GO:0017148">
    <property type="term" value="P:negative regulation of translation"/>
    <property type="evidence" value="ECO:0000318"/>
    <property type="project" value="GO_Central"/>
</dbReference>
<dbReference type="GO" id="GO:0007314">
    <property type="term" value="P:oocyte anterior/posterior axis specification"/>
    <property type="evidence" value="ECO:0000303"/>
    <property type="project" value="FlyBase"/>
</dbReference>
<dbReference type="GO" id="GO:0048477">
    <property type="term" value="P:oogenesis"/>
    <property type="evidence" value="ECO:0000315"/>
    <property type="project" value="FlyBase"/>
</dbReference>
<dbReference type="GO" id="GO:0035282">
    <property type="term" value="P:segmentation"/>
    <property type="evidence" value="ECO:0000315"/>
    <property type="project" value="FlyBase"/>
</dbReference>
<dbReference type="GO" id="GO:0007283">
    <property type="term" value="P:spermatogenesis"/>
    <property type="evidence" value="ECO:0000315"/>
    <property type="project" value="FlyBase"/>
</dbReference>
<dbReference type="CDD" id="cd21924">
    <property type="entry name" value="NBR_nanos"/>
    <property type="match status" value="1"/>
</dbReference>
<dbReference type="FunFam" id="4.10.60.30:FF:000001">
    <property type="entry name" value="nanos homolog 3"/>
    <property type="match status" value="1"/>
</dbReference>
<dbReference type="Gene3D" id="4.10.60.30">
    <property type="entry name" value="Nanos, RNA-binding domain"/>
    <property type="match status" value="1"/>
</dbReference>
<dbReference type="InterPro" id="IPR008705">
    <property type="entry name" value="Nanos/Xcar2"/>
</dbReference>
<dbReference type="InterPro" id="IPR038129">
    <property type="entry name" value="Nanos_sf"/>
</dbReference>
<dbReference type="InterPro" id="IPR024161">
    <property type="entry name" value="Znf_nanos-typ"/>
</dbReference>
<dbReference type="PANTHER" id="PTHR12887">
    <property type="entry name" value="NANOS PROTEIN"/>
    <property type="match status" value="1"/>
</dbReference>
<dbReference type="Pfam" id="PF05741">
    <property type="entry name" value="zf-nanos"/>
    <property type="match status" value="1"/>
</dbReference>
<dbReference type="PROSITE" id="PS51522">
    <property type="entry name" value="ZF_NANOS"/>
    <property type="match status" value="1"/>
</dbReference>
<keyword id="KW-0002">3D-structure</keyword>
<keyword id="KW-0963">Cytoplasm</keyword>
<keyword id="KW-0217">Developmental protein</keyword>
<keyword id="KW-0221">Differentiation</keyword>
<keyword id="KW-0479">Metal-binding</keyword>
<keyword id="KW-0896">Oogenesis</keyword>
<keyword id="KW-1185">Reference proteome</keyword>
<keyword id="KW-0694">RNA-binding</keyword>
<keyword id="KW-0744">Spermatogenesis</keyword>
<keyword id="KW-0810">Translation regulation</keyword>
<keyword id="KW-0862">Zinc</keyword>
<keyword id="KW-0863">Zinc-finger</keyword>
<proteinExistence type="evidence at protein level"/>
<accession>P25724</accession>
<accession>Q9VDZ6</accession>